<comment type="function">
    <text evidence="1">Part of the ABC transporter complex MetNIQ involved in methionine import. Responsible for energy coupling to the transport system.</text>
</comment>
<comment type="catalytic activity">
    <reaction evidence="1">
        <text>L-methionine(out) + ATP + H2O = L-methionine(in) + ADP + phosphate + H(+)</text>
        <dbReference type="Rhea" id="RHEA:29779"/>
        <dbReference type="ChEBI" id="CHEBI:15377"/>
        <dbReference type="ChEBI" id="CHEBI:15378"/>
        <dbReference type="ChEBI" id="CHEBI:30616"/>
        <dbReference type="ChEBI" id="CHEBI:43474"/>
        <dbReference type="ChEBI" id="CHEBI:57844"/>
        <dbReference type="ChEBI" id="CHEBI:456216"/>
        <dbReference type="EC" id="7.4.2.11"/>
    </reaction>
</comment>
<comment type="catalytic activity">
    <reaction evidence="1">
        <text>D-methionine(out) + ATP + H2O = D-methionine(in) + ADP + phosphate + H(+)</text>
        <dbReference type="Rhea" id="RHEA:29767"/>
        <dbReference type="ChEBI" id="CHEBI:15377"/>
        <dbReference type="ChEBI" id="CHEBI:15378"/>
        <dbReference type="ChEBI" id="CHEBI:30616"/>
        <dbReference type="ChEBI" id="CHEBI:43474"/>
        <dbReference type="ChEBI" id="CHEBI:57932"/>
        <dbReference type="ChEBI" id="CHEBI:456216"/>
        <dbReference type="EC" id="7.4.2.11"/>
    </reaction>
</comment>
<comment type="subunit">
    <text evidence="1">The complex is composed of two ATP-binding proteins (MetN), two transmembrane proteins (MetI) and a solute-binding protein (MetQ).</text>
</comment>
<comment type="subcellular location">
    <subcellularLocation>
        <location evidence="1">Cell inner membrane</location>
        <topology evidence="1">Peripheral membrane protein</topology>
    </subcellularLocation>
</comment>
<comment type="similarity">
    <text evidence="1">Belongs to the ABC transporter superfamily. Methionine importer (TC 3.A.1.24) family.</text>
</comment>
<evidence type="ECO:0000255" key="1">
    <source>
        <dbReference type="HAMAP-Rule" id="MF_01719"/>
    </source>
</evidence>
<reference key="1">
    <citation type="journal article" date="2005" name="BMC Genomics">
        <title>Bacterial genome adaptation to niches: divergence of the potential virulence genes in three Burkholderia species of different survival strategies.</title>
        <authorList>
            <person name="Kim H.S."/>
            <person name="Schell M.A."/>
            <person name="Yu Y."/>
            <person name="Ulrich R.L."/>
            <person name="Sarria S.H."/>
            <person name="Nierman W.C."/>
            <person name="DeShazer D."/>
        </authorList>
    </citation>
    <scope>NUCLEOTIDE SEQUENCE [LARGE SCALE GENOMIC DNA]</scope>
    <source>
        <strain>ATCC 700388 / DSM 13276 / CCUG 48851 / CIP 106301 / E264</strain>
    </source>
</reference>
<sequence>MIEIRNLSQRFEGPRGWIEALHNVNLTIPQGEVFGIIGRSGAGKSTLVRTINLLTRPSEGNVFVDGRDLTQLSAGELRGARRDIGMIFQHFNLLSSRTVFGNVALPLELAGVKRAEIEATVLPLLDLVGLAAQKDRYPAQISGGQKQRVGIARALASKPKVLLSDEATSALDPETTRAILDLLRRINRELGLTIVLITHQMEVIKDVCDRVAVLDAGRVVEEGNVIDVFMRPHHEVTRALIGDVIAQELPPAMKARVAERLKTGSGHLLRLAFTGSGVDQPILSETIRRYELDFNILHGQIDEIQGRAFGSLAVLATGEPGKVGQAFAYLREQGVVVEELSYVE</sequence>
<dbReference type="EC" id="7.4.2.11" evidence="1"/>
<dbReference type="EMBL" id="CP000086">
    <property type="protein sequence ID" value="ABC37057.1"/>
    <property type="molecule type" value="Genomic_DNA"/>
</dbReference>
<dbReference type="RefSeq" id="WP_009889868.1">
    <property type="nucleotide sequence ID" value="NZ_CP008785.1"/>
</dbReference>
<dbReference type="SMR" id="Q2SY12"/>
<dbReference type="GeneID" id="45121381"/>
<dbReference type="KEGG" id="bte:BTH_I1650"/>
<dbReference type="HOGENOM" id="CLU_000604_1_3_4"/>
<dbReference type="Proteomes" id="UP000001930">
    <property type="component" value="Chromosome I"/>
</dbReference>
<dbReference type="GO" id="GO:0005886">
    <property type="term" value="C:plasma membrane"/>
    <property type="evidence" value="ECO:0007669"/>
    <property type="project" value="UniProtKB-SubCell"/>
</dbReference>
<dbReference type="GO" id="GO:0033232">
    <property type="term" value="F:ABC-type D-methionine transporter activity"/>
    <property type="evidence" value="ECO:0007669"/>
    <property type="project" value="UniProtKB-EC"/>
</dbReference>
<dbReference type="GO" id="GO:0005524">
    <property type="term" value="F:ATP binding"/>
    <property type="evidence" value="ECO:0007669"/>
    <property type="project" value="UniProtKB-KW"/>
</dbReference>
<dbReference type="GO" id="GO:0016887">
    <property type="term" value="F:ATP hydrolysis activity"/>
    <property type="evidence" value="ECO:0007669"/>
    <property type="project" value="InterPro"/>
</dbReference>
<dbReference type="CDD" id="cd03258">
    <property type="entry name" value="ABC_MetN_methionine_transporter"/>
    <property type="match status" value="1"/>
</dbReference>
<dbReference type="FunFam" id="3.40.50.300:FF:000056">
    <property type="entry name" value="Cell division ATP-binding protein FtsE"/>
    <property type="match status" value="1"/>
</dbReference>
<dbReference type="Gene3D" id="3.30.70.260">
    <property type="match status" value="1"/>
</dbReference>
<dbReference type="Gene3D" id="3.40.50.300">
    <property type="entry name" value="P-loop containing nucleotide triphosphate hydrolases"/>
    <property type="match status" value="1"/>
</dbReference>
<dbReference type="InterPro" id="IPR003593">
    <property type="entry name" value="AAA+_ATPase"/>
</dbReference>
<dbReference type="InterPro" id="IPR003439">
    <property type="entry name" value="ABC_transporter-like_ATP-bd"/>
</dbReference>
<dbReference type="InterPro" id="IPR017871">
    <property type="entry name" value="ABC_transporter-like_CS"/>
</dbReference>
<dbReference type="InterPro" id="IPR045865">
    <property type="entry name" value="ACT-like_dom_sf"/>
</dbReference>
<dbReference type="InterPro" id="IPR041701">
    <property type="entry name" value="MetN_ABC"/>
</dbReference>
<dbReference type="InterPro" id="IPR050086">
    <property type="entry name" value="MetN_ABC_transporter-like"/>
</dbReference>
<dbReference type="InterPro" id="IPR018449">
    <property type="entry name" value="NIL_domain"/>
</dbReference>
<dbReference type="InterPro" id="IPR027417">
    <property type="entry name" value="P-loop_NTPase"/>
</dbReference>
<dbReference type="PANTHER" id="PTHR43166">
    <property type="entry name" value="AMINO ACID IMPORT ATP-BINDING PROTEIN"/>
    <property type="match status" value="1"/>
</dbReference>
<dbReference type="PANTHER" id="PTHR43166:SF30">
    <property type="entry name" value="METHIONINE IMPORT ATP-BINDING PROTEIN METN"/>
    <property type="match status" value="1"/>
</dbReference>
<dbReference type="Pfam" id="PF00005">
    <property type="entry name" value="ABC_tran"/>
    <property type="match status" value="1"/>
</dbReference>
<dbReference type="Pfam" id="PF09383">
    <property type="entry name" value="NIL"/>
    <property type="match status" value="1"/>
</dbReference>
<dbReference type="SMART" id="SM00382">
    <property type="entry name" value="AAA"/>
    <property type="match status" value="1"/>
</dbReference>
<dbReference type="SMART" id="SM00930">
    <property type="entry name" value="NIL"/>
    <property type="match status" value="1"/>
</dbReference>
<dbReference type="SUPFAM" id="SSF55021">
    <property type="entry name" value="ACT-like"/>
    <property type="match status" value="1"/>
</dbReference>
<dbReference type="SUPFAM" id="SSF52540">
    <property type="entry name" value="P-loop containing nucleoside triphosphate hydrolases"/>
    <property type="match status" value="1"/>
</dbReference>
<dbReference type="PROSITE" id="PS00211">
    <property type="entry name" value="ABC_TRANSPORTER_1"/>
    <property type="match status" value="1"/>
</dbReference>
<dbReference type="PROSITE" id="PS50893">
    <property type="entry name" value="ABC_TRANSPORTER_2"/>
    <property type="match status" value="1"/>
</dbReference>
<dbReference type="PROSITE" id="PS51264">
    <property type="entry name" value="METN"/>
    <property type="match status" value="1"/>
</dbReference>
<gene>
    <name evidence="1" type="primary">metN</name>
    <name type="ordered locus">BTH_I1650</name>
</gene>
<feature type="chain" id="PRO_0000270271" description="Methionine import ATP-binding protein MetN">
    <location>
        <begin position="1"/>
        <end position="344"/>
    </location>
</feature>
<feature type="domain" description="ABC transporter" evidence="1">
    <location>
        <begin position="2"/>
        <end position="241"/>
    </location>
</feature>
<feature type="binding site" evidence="1">
    <location>
        <begin position="38"/>
        <end position="45"/>
    </location>
    <ligand>
        <name>ATP</name>
        <dbReference type="ChEBI" id="CHEBI:30616"/>
    </ligand>
</feature>
<proteinExistence type="inferred from homology"/>
<accession>Q2SY12</accession>
<organism>
    <name type="scientific">Burkholderia thailandensis (strain ATCC 700388 / DSM 13276 / CCUG 48851 / CIP 106301 / E264)</name>
    <dbReference type="NCBI Taxonomy" id="271848"/>
    <lineage>
        <taxon>Bacteria</taxon>
        <taxon>Pseudomonadati</taxon>
        <taxon>Pseudomonadota</taxon>
        <taxon>Betaproteobacteria</taxon>
        <taxon>Burkholderiales</taxon>
        <taxon>Burkholderiaceae</taxon>
        <taxon>Burkholderia</taxon>
        <taxon>pseudomallei group</taxon>
    </lineage>
</organism>
<protein>
    <recommendedName>
        <fullName evidence="1">Methionine import ATP-binding protein MetN</fullName>
        <ecNumber evidence="1">7.4.2.11</ecNumber>
    </recommendedName>
</protein>
<keyword id="KW-0029">Amino-acid transport</keyword>
<keyword id="KW-0067">ATP-binding</keyword>
<keyword id="KW-0997">Cell inner membrane</keyword>
<keyword id="KW-1003">Cell membrane</keyword>
<keyword id="KW-0472">Membrane</keyword>
<keyword id="KW-0547">Nucleotide-binding</keyword>
<keyword id="KW-1278">Translocase</keyword>
<keyword id="KW-0813">Transport</keyword>
<name>METN_BURTA</name>